<protein>
    <recommendedName>
        <fullName evidence="6 7">Cinnamate beta-D-glucosyltransferase</fullName>
        <ecNumber evidence="4 5">2.4.1.177</ecNumber>
    </recommendedName>
    <alternativeName>
        <fullName evidence="6">UDP-glucose:cinnamate glucosyltransferase</fullName>
        <shortName evidence="6">FaGT2</shortName>
    </alternativeName>
</protein>
<sequence>MGSESLVHVFLVSFIGQGHVNPLLRLGKRLAAKGLLVTFCTAECVGKEMRKSNGITDEPKPVGDGFIRFEFFKDRWAEDEPMRQDLDLYLPQLELVGKEVIPEMIKKNAEQGRPVSCLINNPFIPWVCDVAESLGLPSAMLWVQSAACLAAYYHYYHGLVPFPSESDMFCDVQIPSMPLLKYDEVPSFLYPTSPYPFLRRAILGQYGNLEKPFCILMDTFQELESEIIEYMARLCPIKAVGPLFKNPKAQNAVRGDFMEADDSIIGWLDTKPKSSVVYISFGSVVYLKQEQVDEIAHGLLSSGVSFIWVMKPPHPDSGFELLVLPEGFLEKAGDRGKVVQWSPQEKILEHPSTACFVTHCGWNSTMESLTSGMPVVAFPQWGDQVTDAKYLVDEFKVGVRMCRGEAEDRVIPRDEVEKCLLEATSGSKAAEMKQNALKWKAAAEAAFSEGGSSDRNLQAFVDEVRRISASLNSKSSAVGYVKSKINGVVEYVDSKLNGKAAPVEEANTRTNGIAKVEQPKAANGKVEIAELTPINGKVEIAELKPINGKVELVES</sequence>
<dbReference type="EC" id="2.4.1.177" evidence="4 5"/>
<dbReference type="EMBL" id="AY663785">
    <property type="protein sequence ID" value="AAU09443.1"/>
    <property type="molecule type" value="mRNA"/>
</dbReference>
<dbReference type="SMR" id="Q66PF4"/>
<dbReference type="CAZy" id="GT1">
    <property type="family name" value="Glycosyltransferase Family 1"/>
</dbReference>
<dbReference type="BioCyc" id="MetaCyc:MONOMER-14069"/>
<dbReference type="BRENDA" id="2.4.1.177">
    <property type="organism ID" value="2320"/>
</dbReference>
<dbReference type="GO" id="GO:0050412">
    <property type="term" value="F:cinnamate beta-D-glucosyltransferase activity"/>
    <property type="evidence" value="ECO:0007669"/>
    <property type="project" value="UniProtKB-EC"/>
</dbReference>
<dbReference type="GO" id="GO:0080043">
    <property type="term" value="F:quercetin 3-O-glucosyltransferase activity"/>
    <property type="evidence" value="ECO:0007669"/>
    <property type="project" value="TreeGrafter"/>
</dbReference>
<dbReference type="GO" id="GO:0080044">
    <property type="term" value="F:quercetin 7-O-glucosyltransferase activity"/>
    <property type="evidence" value="ECO:0007669"/>
    <property type="project" value="TreeGrafter"/>
</dbReference>
<dbReference type="GO" id="GO:0009636">
    <property type="term" value="P:response to toxic substance"/>
    <property type="evidence" value="ECO:0007669"/>
    <property type="project" value="UniProtKB-KW"/>
</dbReference>
<dbReference type="CDD" id="cd03784">
    <property type="entry name" value="GT1_Gtf-like"/>
    <property type="match status" value="1"/>
</dbReference>
<dbReference type="FunFam" id="3.40.50.2000:FF:000019">
    <property type="entry name" value="Glycosyltransferase"/>
    <property type="match status" value="1"/>
</dbReference>
<dbReference type="FunFam" id="3.40.50.2000:FF:000101">
    <property type="entry name" value="Glycosyltransferase"/>
    <property type="match status" value="1"/>
</dbReference>
<dbReference type="Gene3D" id="3.40.50.2000">
    <property type="entry name" value="Glycogen Phosphorylase B"/>
    <property type="match status" value="2"/>
</dbReference>
<dbReference type="InterPro" id="IPR002213">
    <property type="entry name" value="UDP_glucos_trans"/>
</dbReference>
<dbReference type="InterPro" id="IPR035595">
    <property type="entry name" value="UDP_glycos_trans_CS"/>
</dbReference>
<dbReference type="PANTHER" id="PTHR11926">
    <property type="entry name" value="GLUCOSYL/GLUCURONOSYL TRANSFERASES"/>
    <property type="match status" value="1"/>
</dbReference>
<dbReference type="PANTHER" id="PTHR11926:SF986">
    <property type="entry name" value="UDP-GLYCOSYLTRANSFERASE 84A1"/>
    <property type="match status" value="1"/>
</dbReference>
<dbReference type="Pfam" id="PF00201">
    <property type="entry name" value="UDPGT"/>
    <property type="match status" value="1"/>
</dbReference>
<dbReference type="SUPFAM" id="SSF53756">
    <property type="entry name" value="UDP-Glycosyltransferase/glycogen phosphorylase"/>
    <property type="match status" value="1"/>
</dbReference>
<dbReference type="PROSITE" id="PS00375">
    <property type="entry name" value="UDPGT"/>
    <property type="match status" value="1"/>
</dbReference>
<accession>Q66PF4</accession>
<name>CGT_FRAAN</name>
<keyword id="KW-0216">Detoxification</keyword>
<keyword id="KW-0328">Glycosyltransferase</keyword>
<keyword id="KW-0808">Transferase</keyword>
<comment type="function">
    <text evidence="4 5">Broad spectrum multifunctional glucosyltransferase. Catalyzes the formation of cinnamic acid and p-coumaric acid glucose esters during fruit ripening. Accepted substrates range from derivatives of cinnamic acid and benzoic acid to heterocyclic and aliphatic compounds, resulting in the formation of O- and S-glucose esters and O-glucosides. May also be involved in detoxification of xenobiotics.</text>
</comment>
<comment type="catalytic activity">
    <reaction evidence="4 5">
        <text>(E)-cinnamate + UDP-alpha-D-glucose = 1-O-(trans-cinnamoyl)-beta-D-glucose + UDP</text>
        <dbReference type="Rhea" id="RHEA:13437"/>
        <dbReference type="ChEBI" id="CHEBI:15669"/>
        <dbReference type="ChEBI" id="CHEBI:16279"/>
        <dbReference type="ChEBI" id="CHEBI:58223"/>
        <dbReference type="ChEBI" id="CHEBI:58885"/>
        <dbReference type="EC" id="2.4.1.177"/>
    </reaction>
</comment>
<comment type="biophysicochemical properties">
    <kinetics>
        <KM evidence="4 5">356.9 uM for cinnamic acid</KM>
        <KM evidence="4 5">730 uM for cinnamic acid</KM>
        <KM evidence="4 5">80.8 uM for UDP-glucose</KM>
        <KM evidence="4 5">603.5 uM for p-coumaric acid</KM>
        <KM evidence="4 5">707.7 uM for caffeic acid</KM>
        <KM evidence="4 5">358.5 uM for ferulic acid</KM>
        <KM evidence="4 5">315.7 uM for 5-hydroxyferulic acid</KM>
        <KM evidence="4 5">300.2 uM for sinapic acid</KM>
        <KM evidence="4 5">502.6 uM for benzoic acid</KM>
        <KM evidence="4 5">464.4 uM for 3-hydroxybenzoic acid</KM>
        <KM evidence="4 5">642.4 uM for p-hydroxybenzoic acid</KM>
        <KM evidence="4 5">515.3 uM for vanillic acid</KM>
        <KM evidence="4 5">108 uM for 3,4-dimethoxycinnamic acid</KM>
        <KM evidence="4 5">411.2 uM for phenylpropionic acid</KM>
        <KM evidence="4 5">431 uM for phenylbutyric acid</KM>
        <KM evidence="4 5">488.2 uM for 3-aminobenzoic acid</KM>
        <KM evidence="4 5">437.1 uM for 4-aminobenzoic acid</KM>
        <KM evidence="4 5">1.14 mM for 2,4,5-trichlorophenol</KM>
        <KM evidence="4 5">1.33 mM for trans-3-(2-furyl)acrylic acid</KM>
        <KM evidence="4 5">3.23 mM for sorbic acid</KM>
        <KM evidence="4 5">0.58 mM for 4-chlorocinnamic acid</KM>
        <KM evidence="4 5">2.85 mM for 3,5-dichloro-4-hydroxybenzoic acid</KM>
        <KM evidence="4 5">0.93 mM for trans-3-(3-pyridyl)acrylic acid</KM>
        <KM evidence="4 5">2.74 mM for anthranilic acid</KM>
        <KM evidence="4 5">5.76 mM for trans-2-hexenoic acid</KM>
        <KM evidence="4 5">2.75 mM for nicotinic acid</KM>
        <KM evidence="4 5">8.37 mM for thiobenzoic acid</KM>
        <Vmax evidence="4 5">2.34 nmol/sec/mg enzyme with cinnamic acid as substrate</Vmax>
        <Vmax evidence="4 5">6.43 nmol/sec/mg enzyme with cinnamic acid as substrate</Vmax>
        <Vmax evidence="4 5">4.88 nmol/sec/mg enzyme with UDP-glucose as substrate</Vmax>
        <Vmax evidence="4 5">2.69 nmol/sec/mg enzyme with p-coumaric acid as substrate</Vmax>
        <Vmax evidence="4 5">2.59 nmol/sec/mg enzyme with caffeic acid as substrate</Vmax>
        <Vmax evidence="4 5">1.65 nmol/sec/mg enzyme with ferulic acid as substrate</Vmax>
        <Vmax evidence="4 5">2.24 nmol/sec/mg enzyme with 5-hydroxyferulic acid as substrate</Vmax>
        <Vmax evidence="4 5">1.21 nmol/sec/mg enzyme with sinapic acid as substrate</Vmax>
        <Vmax evidence="4 5">1.08 nmol/sec/mg enzyme with benzoic acid as substrate</Vmax>
        <Vmax evidence="4 5">1.05 nmol/sec/mg enzyme with 3-hydroxybenzoic acid as substrate</Vmax>
        <Vmax evidence="4 5">0.77 nmol/sec/mg enzyme with p-hydroxybenzoic acid as substrate</Vmax>
        <Vmax evidence="4 5">1.69 nmol/sec/mg enzyme with vanillic acid as substrate</Vmax>
        <Vmax evidence="4 5">0.68 nmol/sec/mg enzyme with 3,4-dimethoxycinnamic acid as substrate</Vmax>
        <Vmax evidence="4 5">0.17 nmol/sec/mg enzyme with phenylpropionic acid as substrate</Vmax>
        <Vmax evidence="4 5">0.22 nmol/sec/mg enzyme with phenylbutyric acid as substrate</Vmax>
        <Vmax evidence="4 5">0.75 nmol/sec/mg enzyme with 3-aminobenzoic acid as substrate</Vmax>
        <Vmax evidence="4 5">1.73 nmol/sec/mg enzyme with 4-aminobenzoic acid as substrate</Vmax>
        <Vmax evidence="4 5">26.32 nmol/sec/mg enzyme with 2,4,5-trichlorophenol as substrate</Vmax>
        <Vmax evidence="4 5">12.96 nmol/sec/mg enzyme with trans-3-(2-furyl)acrylic acid as substrate</Vmax>
        <Vmax evidence="4 5">18.2 nmol/sec/mg enzyme with sorbic acid as substrate</Vmax>
        <Vmax evidence="4 5">3.23 nmol/sec/mg enzyme with 4-chlorocinnamic acid as substrate</Vmax>
        <Vmax evidence="4 5">10.44 nmol/sec/mg enzyme with 3,5-dichloro-4-hydroxybenzoic acid as substrate</Vmax>
        <Vmax evidence="4 5">0.63 nmol/sec/mg enzyme with trans-3-(3-pyridyl)acrylic acid as substrate</Vmax>
        <Vmax evidence="4 5">1.46 nmol/sec/mg enzyme with anthranilic acid as substrate</Vmax>
        <Vmax evidence="4 5">2.36 nmol/sec/mg enzyme with trans-2-hexenoic acid as substrate</Vmax>
        <Vmax evidence="4 5">0.78 nmol/sec/mg enzyme with nicotinic acid as substrate</Vmax>
        <Vmax evidence="4 5">2.04 nmol/sec/mg enzyme with thiobenzoic acid as substrate</Vmax>
        <text evidence="4 5">The kinetic constants are determined for the recombinant His(6)-tagged protein.</text>
    </kinetics>
    <phDependence>
        <text evidence="4 5">Optimum pH is 8-8.5.</text>
    </phDependence>
    <temperatureDependence>
        <text evidence="4 5">Optimum temperature is 21 degrees Celsius.</text>
    </temperatureDependence>
</comment>
<comment type="tissue specificity">
    <text evidence="4">Highest expression detected in fruit, with lower levels detected in flower and petiole. Barely detectable in leaf and root.</text>
</comment>
<comment type="developmental stage">
    <text evidence="4">Expression increases strongly along the fruit-ripening stages, with maximal expression observed in fully ripe red fruit.</text>
</comment>
<comment type="induction">
    <text evidence="4">By oxidative stress and hydroxycinnamic acids. Down-regulated by synthetic auxin naphthaleneacetic acid (NAA).</text>
</comment>
<comment type="similarity">
    <text evidence="3">Belongs to the UDP-glycosyltransferase family.</text>
</comment>
<feature type="chain" id="PRO_0000411993" description="Cinnamate beta-D-glucosyltransferase">
    <location>
        <begin position="1"/>
        <end position="555"/>
    </location>
</feature>
<feature type="active site" description="Proton acceptor" evidence="1">
    <location>
        <position position="19"/>
    </location>
</feature>
<feature type="binding site" evidence="2">
    <location>
        <position position="19"/>
    </location>
    <ligand>
        <name>an anthocyanidin</name>
        <dbReference type="ChEBI" id="CHEBI:143576"/>
    </ligand>
</feature>
<feature type="binding site" evidence="1">
    <location>
        <position position="344"/>
    </location>
    <ligand>
        <name>UDP-alpha-D-glucose</name>
        <dbReference type="ChEBI" id="CHEBI:58885"/>
    </ligand>
</feature>
<feature type="binding site" evidence="1">
    <location>
        <position position="359"/>
    </location>
    <ligand>
        <name>UDP-alpha-D-glucose</name>
        <dbReference type="ChEBI" id="CHEBI:58885"/>
    </ligand>
</feature>
<feature type="binding site" evidence="1">
    <location>
        <position position="362"/>
    </location>
    <ligand>
        <name>UDP-alpha-D-glucose</name>
        <dbReference type="ChEBI" id="CHEBI:58885"/>
    </ligand>
</feature>
<feature type="binding site" evidence="1">
    <location>
        <position position="363"/>
    </location>
    <ligand>
        <name>UDP-alpha-D-glucose</name>
        <dbReference type="ChEBI" id="CHEBI:58885"/>
    </ligand>
</feature>
<feature type="binding site" evidence="1">
    <location>
        <position position="364"/>
    </location>
    <ligand>
        <name>UDP-alpha-D-glucose</name>
        <dbReference type="ChEBI" id="CHEBI:58885"/>
    </ligand>
</feature>
<feature type="binding site" evidence="1">
    <location>
        <position position="367"/>
    </location>
    <ligand>
        <name>UDP-alpha-D-glucose</name>
        <dbReference type="ChEBI" id="CHEBI:58885"/>
    </ligand>
</feature>
<feature type="binding site" evidence="2">
    <location>
        <position position="382"/>
    </location>
    <ligand>
        <name>an anthocyanidin</name>
        <dbReference type="ChEBI" id="CHEBI:143576"/>
    </ligand>
</feature>
<feature type="binding site" evidence="1">
    <location>
        <position position="383"/>
    </location>
    <ligand>
        <name>UDP-alpha-D-glucose</name>
        <dbReference type="ChEBI" id="CHEBI:58885"/>
    </ligand>
</feature>
<feature type="binding site" evidence="1">
    <location>
        <position position="384"/>
    </location>
    <ligand>
        <name>UDP-alpha-D-glucose</name>
        <dbReference type="ChEBI" id="CHEBI:58885"/>
    </ligand>
</feature>
<gene>
    <name evidence="9" type="primary">GT2</name>
</gene>
<evidence type="ECO:0000250" key="1">
    <source>
        <dbReference type="UniProtKB" id="A0A0A1HA03"/>
    </source>
</evidence>
<evidence type="ECO:0000250" key="2">
    <source>
        <dbReference type="UniProtKB" id="P51094"/>
    </source>
</evidence>
<evidence type="ECO:0000255" key="3"/>
<evidence type="ECO:0000269" key="4">
    <source>
    </source>
</evidence>
<evidence type="ECO:0000269" key="5">
    <source>
    </source>
</evidence>
<evidence type="ECO:0000303" key="6">
    <source>
    </source>
</evidence>
<evidence type="ECO:0000303" key="7">
    <source>
    </source>
</evidence>
<evidence type="ECO:0000305" key="8"/>
<evidence type="ECO:0000312" key="9">
    <source>
        <dbReference type="EMBL" id="AAU09443.1"/>
    </source>
</evidence>
<proteinExistence type="evidence at protein level"/>
<reference evidence="8 9" key="1">
    <citation type="journal article" date="2006" name="Plant Physiol.">
        <title>Cinnamate metabolism in ripening fruit. Characterization of a UDP-glucose:cinnamate glucosyltransferase from strawberry.</title>
        <authorList>
            <person name="Lunkenbein S."/>
            <person name="Bellido M."/>
            <person name="Aharoni A."/>
            <person name="Salentijn E.M."/>
            <person name="Kaldenhoff R."/>
            <person name="Coiner H.A."/>
            <person name="Munoz-Blanco J."/>
            <person name="Schwab W."/>
        </authorList>
    </citation>
    <scope>NUCLEOTIDE SEQUENCE [MRNA]</scope>
    <scope>FUNCTION</scope>
    <scope>CATALYTIC ACTIVITY</scope>
    <scope>BIOPHYSICOCHEMICAL PROPERTIES</scope>
    <scope>TISSUE SPECIFICITY</scope>
    <scope>DEVELOPMENTAL STAGE</scope>
    <scope>INDUCTION</scope>
    <source>
        <strain evidence="4">cv. Elsanta</strain>
    </source>
</reference>
<reference evidence="8" key="2">
    <citation type="journal article" date="2007" name="Planta">
        <title>FaGT2: a multifunctional enzyme from strawberry (Fragaria x ananassa) fruits involved in the metabolism of natural and xenobiotic compounds.</title>
        <authorList>
            <person name="Landmann C."/>
            <person name="Fink B."/>
            <person name="Schwab W."/>
        </authorList>
    </citation>
    <scope>FUNCTION</scope>
    <scope>CATALYTIC ACTIVITY</scope>
    <scope>BIOPHYSICOCHEMICAL PROPERTIES</scope>
</reference>
<organism>
    <name type="scientific">Fragaria ananassa</name>
    <name type="common">Strawberry</name>
    <name type="synonym">Fragaria chiloensis x Fragaria virginiana</name>
    <dbReference type="NCBI Taxonomy" id="3747"/>
    <lineage>
        <taxon>Eukaryota</taxon>
        <taxon>Viridiplantae</taxon>
        <taxon>Streptophyta</taxon>
        <taxon>Embryophyta</taxon>
        <taxon>Tracheophyta</taxon>
        <taxon>Spermatophyta</taxon>
        <taxon>Magnoliopsida</taxon>
        <taxon>eudicotyledons</taxon>
        <taxon>Gunneridae</taxon>
        <taxon>Pentapetalae</taxon>
        <taxon>rosids</taxon>
        <taxon>fabids</taxon>
        <taxon>Rosales</taxon>
        <taxon>Rosaceae</taxon>
        <taxon>Rosoideae</taxon>
        <taxon>Potentilleae</taxon>
        <taxon>Fragariinae</taxon>
        <taxon>Fragaria</taxon>
    </lineage>
</organism>